<comment type="function">
    <text evidence="1">Catalyzes a salvage reaction resulting in the formation of AMP, that is energically less costly than de novo synthesis.</text>
</comment>
<comment type="catalytic activity">
    <reaction evidence="1">
        <text>AMP + diphosphate = 5-phospho-alpha-D-ribose 1-diphosphate + adenine</text>
        <dbReference type="Rhea" id="RHEA:16609"/>
        <dbReference type="ChEBI" id="CHEBI:16708"/>
        <dbReference type="ChEBI" id="CHEBI:33019"/>
        <dbReference type="ChEBI" id="CHEBI:58017"/>
        <dbReference type="ChEBI" id="CHEBI:456215"/>
        <dbReference type="EC" id="2.4.2.7"/>
    </reaction>
</comment>
<comment type="pathway">
    <text evidence="1">Purine metabolism; AMP biosynthesis via salvage pathway; AMP from adenine: step 1/1.</text>
</comment>
<comment type="subunit">
    <text evidence="1">Homodimer.</text>
</comment>
<comment type="subcellular location">
    <subcellularLocation>
        <location evidence="1">Cytoplasm</location>
    </subcellularLocation>
</comment>
<comment type="similarity">
    <text evidence="1">Belongs to the purine/pyrimidine phosphoribosyltransferase family.</text>
</comment>
<comment type="sequence caution" evidence="2">
    <conflict type="erroneous initiation">
        <sequence resource="EMBL-CDS" id="CAJ11512"/>
    </conflict>
</comment>
<name>APT_BRUA2</name>
<dbReference type="EC" id="2.4.2.7" evidence="1"/>
<dbReference type="EMBL" id="AM040264">
    <property type="protein sequence ID" value="CAJ11512.1"/>
    <property type="status" value="ALT_INIT"/>
    <property type="molecule type" value="Genomic_DNA"/>
</dbReference>
<dbReference type="RefSeq" id="WP_002964645.1">
    <property type="nucleotide sequence ID" value="NZ_KN046823.1"/>
</dbReference>
<dbReference type="SMR" id="Q2YM57"/>
<dbReference type="STRING" id="359391.BAB1_1556"/>
<dbReference type="KEGG" id="bmf:BAB1_1556"/>
<dbReference type="HOGENOM" id="CLU_063339_3_0_5"/>
<dbReference type="PhylomeDB" id="Q2YM57"/>
<dbReference type="UniPathway" id="UPA00588">
    <property type="reaction ID" value="UER00646"/>
</dbReference>
<dbReference type="Proteomes" id="UP000002719">
    <property type="component" value="Chromosome I"/>
</dbReference>
<dbReference type="GO" id="GO:0005737">
    <property type="term" value="C:cytoplasm"/>
    <property type="evidence" value="ECO:0007669"/>
    <property type="project" value="UniProtKB-SubCell"/>
</dbReference>
<dbReference type="GO" id="GO:0002055">
    <property type="term" value="F:adenine binding"/>
    <property type="evidence" value="ECO:0007669"/>
    <property type="project" value="TreeGrafter"/>
</dbReference>
<dbReference type="GO" id="GO:0003999">
    <property type="term" value="F:adenine phosphoribosyltransferase activity"/>
    <property type="evidence" value="ECO:0007669"/>
    <property type="project" value="UniProtKB-UniRule"/>
</dbReference>
<dbReference type="GO" id="GO:0016208">
    <property type="term" value="F:AMP binding"/>
    <property type="evidence" value="ECO:0007669"/>
    <property type="project" value="TreeGrafter"/>
</dbReference>
<dbReference type="GO" id="GO:0006168">
    <property type="term" value="P:adenine salvage"/>
    <property type="evidence" value="ECO:0007669"/>
    <property type="project" value="InterPro"/>
</dbReference>
<dbReference type="GO" id="GO:0044209">
    <property type="term" value="P:AMP salvage"/>
    <property type="evidence" value="ECO:0007669"/>
    <property type="project" value="UniProtKB-UniRule"/>
</dbReference>
<dbReference type="GO" id="GO:0006166">
    <property type="term" value="P:purine ribonucleoside salvage"/>
    <property type="evidence" value="ECO:0007669"/>
    <property type="project" value="UniProtKB-KW"/>
</dbReference>
<dbReference type="CDD" id="cd06223">
    <property type="entry name" value="PRTases_typeI"/>
    <property type="match status" value="1"/>
</dbReference>
<dbReference type="FunFam" id="3.40.50.2020:FF:000021">
    <property type="entry name" value="Adenine phosphoribosyltransferase"/>
    <property type="match status" value="1"/>
</dbReference>
<dbReference type="Gene3D" id="3.40.50.2020">
    <property type="match status" value="1"/>
</dbReference>
<dbReference type="HAMAP" id="MF_00004">
    <property type="entry name" value="Aden_phosphoribosyltr"/>
    <property type="match status" value="1"/>
</dbReference>
<dbReference type="InterPro" id="IPR005764">
    <property type="entry name" value="Ade_phspho_trans"/>
</dbReference>
<dbReference type="InterPro" id="IPR000836">
    <property type="entry name" value="PRibTrfase_dom"/>
</dbReference>
<dbReference type="InterPro" id="IPR029057">
    <property type="entry name" value="PRTase-like"/>
</dbReference>
<dbReference type="InterPro" id="IPR050054">
    <property type="entry name" value="UPRTase/APRTase"/>
</dbReference>
<dbReference type="NCBIfam" id="TIGR01090">
    <property type="entry name" value="apt"/>
    <property type="match status" value="1"/>
</dbReference>
<dbReference type="NCBIfam" id="NF002634">
    <property type="entry name" value="PRK02304.1-3"/>
    <property type="match status" value="1"/>
</dbReference>
<dbReference type="NCBIfam" id="NF002636">
    <property type="entry name" value="PRK02304.1-5"/>
    <property type="match status" value="1"/>
</dbReference>
<dbReference type="PANTHER" id="PTHR32315">
    <property type="entry name" value="ADENINE PHOSPHORIBOSYLTRANSFERASE"/>
    <property type="match status" value="1"/>
</dbReference>
<dbReference type="PANTHER" id="PTHR32315:SF3">
    <property type="entry name" value="ADENINE PHOSPHORIBOSYLTRANSFERASE"/>
    <property type="match status" value="1"/>
</dbReference>
<dbReference type="Pfam" id="PF00156">
    <property type="entry name" value="Pribosyltran"/>
    <property type="match status" value="1"/>
</dbReference>
<dbReference type="SUPFAM" id="SSF53271">
    <property type="entry name" value="PRTase-like"/>
    <property type="match status" value="1"/>
</dbReference>
<dbReference type="PROSITE" id="PS00103">
    <property type="entry name" value="PUR_PYR_PR_TRANSFER"/>
    <property type="match status" value="1"/>
</dbReference>
<reference key="1">
    <citation type="journal article" date="2005" name="Infect. Immun.">
        <title>Whole-genome analyses of speciation events in pathogenic Brucellae.</title>
        <authorList>
            <person name="Chain P.S."/>
            <person name="Comerci D.J."/>
            <person name="Tolmasky M.E."/>
            <person name="Larimer F.W."/>
            <person name="Malfatti S.A."/>
            <person name="Vergez L.M."/>
            <person name="Aguero F."/>
            <person name="Land M.L."/>
            <person name="Ugalde R.A."/>
            <person name="Garcia E."/>
        </authorList>
    </citation>
    <scope>NUCLEOTIDE SEQUENCE [LARGE SCALE GENOMIC DNA]</scope>
    <source>
        <strain>2308</strain>
    </source>
</reference>
<sequence>MESGFKVTLKDAIRTIPDYPKPGVQFRDVTTLMGNAQAFRRAVDELVYPYAGNRIDKVAGIEARGFILGGAIAHQLSAGFVPIRKKGKLPRDTVRIAYSLEYGVDEMEMHRDAIEKGERVVLVDDLIATGGTAEAAAKLLLQMGAEIVAACFIIDLPDLGGRKKLEALGLPVRTLVAFEGD</sequence>
<accession>Q2YM57</accession>
<evidence type="ECO:0000255" key="1">
    <source>
        <dbReference type="HAMAP-Rule" id="MF_00004"/>
    </source>
</evidence>
<evidence type="ECO:0000305" key="2"/>
<gene>
    <name evidence="1" type="primary">apt</name>
    <name type="ordered locus">BAB1_1556</name>
</gene>
<organism>
    <name type="scientific">Brucella abortus (strain 2308)</name>
    <dbReference type="NCBI Taxonomy" id="359391"/>
    <lineage>
        <taxon>Bacteria</taxon>
        <taxon>Pseudomonadati</taxon>
        <taxon>Pseudomonadota</taxon>
        <taxon>Alphaproteobacteria</taxon>
        <taxon>Hyphomicrobiales</taxon>
        <taxon>Brucellaceae</taxon>
        <taxon>Brucella/Ochrobactrum group</taxon>
        <taxon>Brucella</taxon>
    </lineage>
</organism>
<feature type="chain" id="PRO_0000321341" description="Adenine phosphoribosyltransferase">
    <location>
        <begin position="1"/>
        <end position="181"/>
    </location>
</feature>
<protein>
    <recommendedName>
        <fullName evidence="1">Adenine phosphoribosyltransferase</fullName>
        <shortName evidence="1">APRT</shortName>
        <ecNumber evidence="1">2.4.2.7</ecNumber>
    </recommendedName>
</protein>
<keyword id="KW-0963">Cytoplasm</keyword>
<keyword id="KW-0328">Glycosyltransferase</keyword>
<keyword id="KW-0660">Purine salvage</keyword>
<keyword id="KW-1185">Reference proteome</keyword>
<keyword id="KW-0808">Transferase</keyword>
<proteinExistence type="inferred from homology"/>